<organism>
    <name type="scientific">Maricaulis maris (strain MCS10)</name>
    <name type="common">Caulobacter maris</name>
    <dbReference type="NCBI Taxonomy" id="394221"/>
    <lineage>
        <taxon>Bacteria</taxon>
        <taxon>Pseudomonadati</taxon>
        <taxon>Pseudomonadota</taxon>
        <taxon>Alphaproteobacteria</taxon>
        <taxon>Maricaulales</taxon>
        <taxon>Maricaulaceae</taxon>
        <taxon>Maricaulis</taxon>
    </lineage>
</organism>
<keyword id="KW-1185">Reference proteome</keyword>
<keyword id="KW-0687">Ribonucleoprotein</keyword>
<keyword id="KW-0689">Ribosomal protein</keyword>
<keyword id="KW-0694">RNA-binding</keyword>
<keyword id="KW-0699">rRNA-binding</keyword>
<keyword id="KW-0820">tRNA-binding</keyword>
<protein>
    <recommendedName>
        <fullName evidence="1">Large ribosomal subunit protein uL16</fullName>
    </recommendedName>
    <alternativeName>
        <fullName evidence="2">50S ribosomal protein L16</fullName>
    </alternativeName>
</protein>
<name>RL16_MARMM</name>
<dbReference type="EMBL" id="CP000449">
    <property type="protein sequence ID" value="ABI66080.1"/>
    <property type="molecule type" value="Genomic_DNA"/>
</dbReference>
<dbReference type="RefSeq" id="WP_011643726.1">
    <property type="nucleotide sequence ID" value="NC_008347.1"/>
</dbReference>
<dbReference type="SMR" id="Q0ANQ7"/>
<dbReference type="STRING" id="394221.Mmar10_1788"/>
<dbReference type="KEGG" id="mmr:Mmar10_1788"/>
<dbReference type="eggNOG" id="COG0197">
    <property type="taxonomic scope" value="Bacteria"/>
</dbReference>
<dbReference type="HOGENOM" id="CLU_078858_2_1_5"/>
<dbReference type="OrthoDB" id="9802589at2"/>
<dbReference type="Proteomes" id="UP000001964">
    <property type="component" value="Chromosome"/>
</dbReference>
<dbReference type="GO" id="GO:0022625">
    <property type="term" value="C:cytosolic large ribosomal subunit"/>
    <property type="evidence" value="ECO:0007669"/>
    <property type="project" value="TreeGrafter"/>
</dbReference>
<dbReference type="GO" id="GO:0019843">
    <property type="term" value="F:rRNA binding"/>
    <property type="evidence" value="ECO:0007669"/>
    <property type="project" value="UniProtKB-UniRule"/>
</dbReference>
<dbReference type="GO" id="GO:0003735">
    <property type="term" value="F:structural constituent of ribosome"/>
    <property type="evidence" value="ECO:0007669"/>
    <property type="project" value="InterPro"/>
</dbReference>
<dbReference type="GO" id="GO:0000049">
    <property type="term" value="F:tRNA binding"/>
    <property type="evidence" value="ECO:0007669"/>
    <property type="project" value="UniProtKB-KW"/>
</dbReference>
<dbReference type="GO" id="GO:0006412">
    <property type="term" value="P:translation"/>
    <property type="evidence" value="ECO:0007669"/>
    <property type="project" value="UniProtKB-UniRule"/>
</dbReference>
<dbReference type="CDD" id="cd01433">
    <property type="entry name" value="Ribosomal_L16_L10e"/>
    <property type="match status" value="1"/>
</dbReference>
<dbReference type="FunFam" id="3.90.1170.10:FF:000001">
    <property type="entry name" value="50S ribosomal protein L16"/>
    <property type="match status" value="1"/>
</dbReference>
<dbReference type="Gene3D" id="3.90.1170.10">
    <property type="entry name" value="Ribosomal protein L10e/L16"/>
    <property type="match status" value="1"/>
</dbReference>
<dbReference type="HAMAP" id="MF_01342">
    <property type="entry name" value="Ribosomal_uL16"/>
    <property type="match status" value="1"/>
</dbReference>
<dbReference type="InterPro" id="IPR047873">
    <property type="entry name" value="Ribosomal_uL16"/>
</dbReference>
<dbReference type="InterPro" id="IPR000114">
    <property type="entry name" value="Ribosomal_uL16_bact-type"/>
</dbReference>
<dbReference type="InterPro" id="IPR020798">
    <property type="entry name" value="Ribosomal_uL16_CS"/>
</dbReference>
<dbReference type="InterPro" id="IPR016180">
    <property type="entry name" value="Ribosomal_uL16_dom"/>
</dbReference>
<dbReference type="InterPro" id="IPR036920">
    <property type="entry name" value="Ribosomal_uL16_sf"/>
</dbReference>
<dbReference type="NCBIfam" id="TIGR01164">
    <property type="entry name" value="rplP_bact"/>
    <property type="match status" value="1"/>
</dbReference>
<dbReference type="PANTHER" id="PTHR12220">
    <property type="entry name" value="50S/60S RIBOSOMAL PROTEIN L16"/>
    <property type="match status" value="1"/>
</dbReference>
<dbReference type="PANTHER" id="PTHR12220:SF13">
    <property type="entry name" value="LARGE RIBOSOMAL SUBUNIT PROTEIN UL16M"/>
    <property type="match status" value="1"/>
</dbReference>
<dbReference type="Pfam" id="PF00252">
    <property type="entry name" value="Ribosomal_L16"/>
    <property type="match status" value="1"/>
</dbReference>
<dbReference type="PRINTS" id="PR00060">
    <property type="entry name" value="RIBOSOMALL16"/>
</dbReference>
<dbReference type="SUPFAM" id="SSF54686">
    <property type="entry name" value="Ribosomal protein L16p/L10e"/>
    <property type="match status" value="1"/>
</dbReference>
<dbReference type="PROSITE" id="PS00586">
    <property type="entry name" value="RIBOSOMAL_L16_1"/>
    <property type="match status" value="1"/>
</dbReference>
<dbReference type="PROSITE" id="PS00701">
    <property type="entry name" value="RIBOSOMAL_L16_2"/>
    <property type="match status" value="1"/>
</dbReference>
<accession>Q0ANQ7</accession>
<comment type="function">
    <text evidence="1">Binds 23S rRNA and is also seen to make contacts with the A and possibly P site tRNAs.</text>
</comment>
<comment type="subunit">
    <text evidence="1">Part of the 50S ribosomal subunit.</text>
</comment>
<comment type="similarity">
    <text evidence="1">Belongs to the universal ribosomal protein uL16 family.</text>
</comment>
<reference key="1">
    <citation type="submission" date="2006-08" db="EMBL/GenBank/DDBJ databases">
        <title>Complete sequence of Maricaulis maris MCS10.</title>
        <authorList>
            <consortium name="US DOE Joint Genome Institute"/>
            <person name="Copeland A."/>
            <person name="Lucas S."/>
            <person name="Lapidus A."/>
            <person name="Barry K."/>
            <person name="Detter J.C."/>
            <person name="Glavina del Rio T."/>
            <person name="Hammon N."/>
            <person name="Israni S."/>
            <person name="Dalin E."/>
            <person name="Tice H."/>
            <person name="Pitluck S."/>
            <person name="Saunders E."/>
            <person name="Brettin T."/>
            <person name="Bruce D."/>
            <person name="Han C."/>
            <person name="Tapia R."/>
            <person name="Gilna P."/>
            <person name="Schmutz J."/>
            <person name="Larimer F."/>
            <person name="Land M."/>
            <person name="Hauser L."/>
            <person name="Kyrpides N."/>
            <person name="Mikhailova N."/>
            <person name="Viollier P."/>
            <person name="Stephens C."/>
            <person name="Richardson P."/>
        </authorList>
    </citation>
    <scope>NUCLEOTIDE SEQUENCE [LARGE SCALE GENOMIC DNA]</scope>
    <source>
        <strain>MCS10</strain>
    </source>
</reference>
<feature type="chain" id="PRO_1000054650" description="Large ribosomal subunit protein uL16">
    <location>
        <begin position="1"/>
        <end position="137"/>
    </location>
</feature>
<gene>
    <name evidence="1" type="primary">rplP</name>
    <name type="ordered locus">Mmar10_1788</name>
</gene>
<proteinExistence type="inferred from homology"/>
<sequence length="137" mass="15304">MLQPKRTKFRKAHKGRIKGAAKGGFTLNFGSYGLKALQPERVTARQIEATRRAITRHMKRAGRVWIRIFPDVPVSKKPTEVRMGKGKGSPEFWACKVKPGRIMFEIDGVPENVAREALELGAAKLPVKTKIVARLGE</sequence>
<evidence type="ECO:0000255" key="1">
    <source>
        <dbReference type="HAMAP-Rule" id="MF_01342"/>
    </source>
</evidence>
<evidence type="ECO:0000305" key="2"/>